<name>CINA_HALH5</name>
<protein>
    <recommendedName>
        <fullName evidence="1">Putative competence-damage inducible protein</fullName>
    </recommendedName>
</protein>
<dbReference type="EMBL" id="BA000004">
    <property type="protein sequence ID" value="BAB06104.1"/>
    <property type="molecule type" value="Genomic_DNA"/>
</dbReference>
<dbReference type="PIR" id="A83948">
    <property type="entry name" value="A83948"/>
</dbReference>
<dbReference type="RefSeq" id="WP_010898538.1">
    <property type="nucleotide sequence ID" value="NC_002570.2"/>
</dbReference>
<dbReference type="SMR" id="Q9KAA5"/>
<dbReference type="STRING" id="272558.gene:10728283"/>
<dbReference type="KEGG" id="bha:BH2385"/>
<dbReference type="eggNOG" id="COG1058">
    <property type="taxonomic scope" value="Bacteria"/>
</dbReference>
<dbReference type="eggNOG" id="COG1546">
    <property type="taxonomic scope" value="Bacteria"/>
</dbReference>
<dbReference type="HOGENOM" id="CLU_030805_9_3_9"/>
<dbReference type="OrthoDB" id="9801454at2"/>
<dbReference type="Proteomes" id="UP000001258">
    <property type="component" value="Chromosome"/>
</dbReference>
<dbReference type="CDD" id="cd00885">
    <property type="entry name" value="cinA"/>
    <property type="match status" value="1"/>
</dbReference>
<dbReference type="Gene3D" id="3.30.70.2860">
    <property type="match status" value="1"/>
</dbReference>
<dbReference type="Gene3D" id="3.90.950.20">
    <property type="entry name" value="CinA-like"/>
    <property type="match status" value="1"/>
</dbReference>
<dbReference type="Gene3D" id="3.40.980.10">
    <property type="entry name" value="MoaB/Mog-like domain"/>
    <property type="match status" value="1"/>
</dbReference>
<dbReference type="HAMAP" id="MF_00226_B">
    <property type="entry name" value="CinA_B"/>
    <property type="match status" value="1"/>
</dbReference>
<dbReference type="InterPro" id="IPR050101">
    <property type="entry name" value="CinA"/>
</dbReference>
<dbReference type="InterPro" id="IPR036653">
    <property type="entry name" value="CinA-like_C"/>
</dbReference>
<dbReference type="InterPro" id="IPR008136">
    <property type="entry name" value="CinA_C"/>
</dbReference>
<dbReference type="InterPro" id="IPR041424">
    <property type="entry name" value="CinA_KH"/>
</dbReference>
<dbReference type="InterPro" id="IPR008135">
    <property type="entry name" value="Competence-induced_CinA"/>
</dbReference>
<dbReference type="InterPro" id="IPR036425">
    <property type="entry name" value="MoaB/Mog-like_dom_sf"/>
</dbReference>
<dbReference type="InterPro" id="IPR001453">
    <property type="entry name" value="MoaB/Mog_dom"/>
</dbReference>
<dbReference type="NCBIfam" id="TIGR00200">
    <property type="entry name" value="cinA_nterm"/>
    <property type="match status" value="1"/>
</dbReference>
<dbReference type="NCBIfam" id="TIGR00177">
    <property type="entry name" value="molyb_syn"/>
    <property type="match status" value="1"/>
</dbReference>
<dbReference type="NCBIfam" id="TIGR00199">
    <property type="entry name" value="PncC_domain"/>
    <property type="match status" value="1"/>
</dbReference>
<dbReference type="NCBIfam" id="NF001813">
    <property type="entry name" value="PRK00549.1"/>
    <property type="match status" value="1"/>
</dbReference>
<dbReference type="PANTHER" id="PTHR13939">
    <property type="entry name" value="NICOTINAMIDE-NUCLEOTIDE AMIDOHYDROLASE PNCC"/>
    <property type="match status" value="1"/>
</dbReference>
<dbReference type="PANTHER" id="PTHR13939:SF0">
    <property type="entry name" value="NMN AMIDOHYDROLASE-LIKE PROTEIN YFAY"/>
    <property type="match status" value="1"/>
</dbReference>
<dbReference type="Pfam" id="PF02464">
    <property type="entry name" value="CinA"/>
    <property type="match status" value="1"/>
</dbReference>
<dbReference type="Pfam" id="PF18146">
    <property type="entry name" value="CinA_KH"/>
    <property type="match status" value="1"/>
</dbReference>
<dbReference type="Pfam" id="PF00994">
    <property type="entry name" value="MoCF_biosynth"/>
    <property type="match status" value="1"/>
</dbReference>
<dbReference type="PIRSF" id="PIRSF006728">
    <property type="entry name" value="CinA"/>
    <property type="match status" value="1"/>
</dbReference>
<dbReference type="SMART" id="SM00852">
    <property type="entry name" value="MoCF_biosynth"/>
    <property type="match status" value="1"/>
</dbReference>
<dbReference type="SUPFAM" id="SSF142433">
    <property type="entry name" value="CinA-like"/>
    <property type="match status" value="1"/>
</dbReference>
<dbReference type="SUPFAM" id="SSF53218">
    <property type="entry name" value="Molybdenum cofactor biosynthesis proteins"/>
    <property type="match status" value="1"/>
</dbReference>
<accession>Q9KAA5</accession>
<organism>
    <name type="scientific">Halalkalibacterium halodurans (strain ATCC BAA-125 / DSM 18197 / FERM 7344 / JCM 9153 / C-125)</name>
    <name type="common">Bacillus halodurans</name>
    <dbReference type="NCBI Taxonomy" id="272558"/>
    <lineage>
        <taxon>Bacteria</taxon>
        <taxon>Bacillati</taxon>
        <taxon>Bacillota</taxon>
        <taxon>Bacilli</taxon>
        <taxon>Bacillales</taxon>
        <taxon>Bacillaceae</taxon>
        <taxon>Halalkalibacterium (ex Joshi et al. 2022)</taxon>
    </lineage>
</organism>
<reference key="1">
    <citation type="journal article" date="2000" name="Nucleic Acids Res.">
        <title>Complete genome sequence of the alkaliphilic bacterium Bacillus halodurans and genomic sequence comparison with Bacillus subtilis.</title>
        <authorList>
            <person name="Takami H."/>
            <person name="Nakasone K."/>
            <person name="Takaki Y."/>
            <person name="Maeno G."/>
            <person name="Sasaki R."/>
            <person name="Masui N."/>
            <person name="Fuji F."/>
            <person name="Hirama C."/>
            <person name="Nakamura Y."/>
            <person name="Ogasawara N."/>
            <person name="Kuhara S."/>
            <person name="Horikoshi K."/>
        </authorList>
    </citation>
    <scope>NUCLEOTIDE SEQUENCE [LARGE SCALE GENOMIC DNA]</scope>
    <source>
        <strain>ATCC BAA-125 / DSM 18197 / FERM 7344 / JCM 9153 / C-125</strain>
    </source>
</reference>
<evidence type="ECO:0000255" key="1">
    <source>
        <dbReference type="HAMAP-Rule" id="MF_00226"/>
    </source>
</evidence>
<gene>
    <name evidence="1" type="primary">cinA</name>
    <name type="ordered locus">BH2385</name>
</gene>
<sequence length="420" mass="46094">MKAEVIAVGSELLLGQIANTNGQFLSQQLAKAGVDVFYHSVVGDNATRLQETLEIASERSELIILTGGLGPTKDDLTKEVVASFLHKELVIDEVALEQIVSFFEKRNLPMTENNRKQALVLKEATIFQNHYGMAPGMATIHQGVTYVLLPGPPREMRPMVTEQVIPFLSSHVGDLQIISRVLRFFGIGESKLETELEDLIDGQSNPTIAPLASEGEVTLRLTVKHHDETQAALLLDETERKIRERVGHYFYGYDETSLMEKLVSCLTKTGLSLASAESLTGGLFGARITNIPGASACFLAAITTYTNDMKQSWLNVPPHVLEQHGAVSPECAIAMAQGVKKLTKADVTISFTGVAGPSPSEGKEPGTVFIGLCFRDDEPEAITLQLSGSREQIRERTLKHGCQQILNRIKRWNERSNDKV</sequence>
<feature type="chain" id="PRO_0000156750" description="Putative competence-damage inducible protein">
    <location>
        <begin position="1"/>
        <end position="420"/>
    </location>
</feature>
<comment type="similarity">
    <text evidence="1">Belongs to the CinA family.</text>
</comment>
<keyword id="KW-1185">Reference proteome</keyword>
<proteinExistence type="inferred from homology"/>